<organism>
    <name type="scientific">Homo sapiens</name>
    <name type="common">Human</name>
    <dbReference type="NCBI Taxonomy" id="9606"/>
    <lineage>
        <taxon>Eukaryota</taxon>
        <taxon>Metazoa</taxon>
        <taxon>Chordata</taxon>
        <taxon>Craniata</taxon>
        <taxon>Vertebrata</taxon>
        <taxon>Euteleostomi</taxon>
        <taxon>Mammalia</taxon>
        <taxon>Eutheria</taxon>
        <taxon>Euarchontoglires</taxon>
        <taxon>Primates</taxon>
        <taxon>Haplorrhini</taxon>
        <taxon>Catarrhini</taxon>
        <taxon>Hominidae</taxon>
        <taxon>Homo</taxon>
    </lineage>
</organism>
<gene>
    <name evidence="11 14" type="primary">ADGRG4</name>
    <name evidence="12" type="synonym">GPR112</name>
</gene>
<dbReference type="EMBL" id="AY140954">
    <property type="protein sequence ID" value="AAN46668.1"/>
    <property type="molecule type" value="mRNA"/>
</dbReference>
<dbReference type="EMBL" id="AY882585">
    <property type="protein sequence ID" value="AAW78659.1"/>
    <property type="molecule type" value="mRNA"/>
</dbReference>
<dbReference type="EMBL" id="AL078638">
    <property type="status" value="NOT_ANNOTATED_CDS"/>
    <property type="molecule type" value="Genomic_DNA"/>
</dbReference>
<dbReference type="EMBL" id="AL136167">
    <property type="status" value="NOT_ANNOTATED_CDS"/>
    <property type="molecule type" value="Genomic_DNA"/>
</dbReference>
<dbReference type="EMBL" id="AL161778">
    <property type="status" value="NOT_ANNOTATED_CDS"/>
    <property type="molecule type" value="Genomic_DNA"/>
</dbReference>
<dbReference type="EMBL" id="AY255581">
    <property type="protein sequence ID" value="AAO85093.1"/>
    <property type="molecule type" value="mRNA"/>
</dbReference>
<dbReference type="CCDS" id="CCDS35409.1">
    <molecule id="Q8IZF6-1"/>
</dbReference>
<dbReference type="RefSeq" id="NP_722576.3">
    <molecule id="Q8IZF6-1"/>
    <property type="nucleotide sequence ID" value="NM_153834.3"/>
</dbReference>
<dbReference type="RefSeq" id="XP_011529571.1">
    <molecule id="Q8IZF6-1"/>
    <property type="nucleotide sequence ID" value="XM_011531269.3"/>
</dbReference>
<dbReference type="RefSeq" id="XP_054182454.1">
    <molecule id="Q8IZF6-1"/>
    <property type="nucleotide sequence ID" value="XM_054326479.1"/>
</dbReference>
<dbReference type="PDB" id="7WUJ">
    <property type="method" value="EM"/>
    <property type="resolution" value="3.30 A"/>
    <property type="chains" value="E=2720-3080"/>
</dbReference>
<dbReference type="PDB" id="8B55">
    <property type="method" value="X-ray"/>
    <property type="resolution" value="1.36 A"/>
    <property type="chains" value="A=26-240"/>
</dbReference>
<dbReference type="PDBsum" id="7WUJ"/>
<dbReference type="PDBsum" id="8B55"/>
<dbReference type="SASBDB" id="Q8IZF6"/>
<dbReference type="SMR" id="Q8IZF6"/>
<dbReference type="BioGRID" id="126563">
    <property type="interactions" value="9"/>
</dbReference>
<dbReference type="FunCoup" id="Q8IZF6">
    <property type="interactions" value="1"/>
</dbReference>
<dbReference type="IntAct" id="Q8IZF6">
    <property type="interactions" value="2"/>
</dbReference>
<dbReference type="STRING" id="9606.ENSP00000377699"/>
<dbReference type="MEROPS" id="P02.014"/>
<dbReference type="GlyCosmos" id="Q8IZF6">
    <property type="glycosylation" value="8 sites, No reported glycans"/>
</dbReference>
<dbReference type="GlyGen" id="Q8IZF6">
    <property type="glycosylation" value="13 sites"/>
</dbReference>
<dbReference type="iPTMnet" id="Q8IZF6"/>
<dbReference type="PhosphoSitePlus" id="Q8IZF6"/>
<dbReference type="BioMuta" id="ADGRG4"/>
<dbReference type="DMDM" id="259016241"/>
<dbReference type="jPOST" id="Q8IZF6"/>
<dbReference type="MassIVE" id="Q8IZF6"/>
<dbReference type="PaxDb" id="9606-ENSP00000377699"/>
<dbReference type="PeptideAtlas" id="Q8IZF6"/>
<dbReference type="ProteomicsDB" id="71345">
    <molecule id="Q8IZF6-1"/>
</dbReference>
<dbReference type="ProteomicsDB" id="71346">
    <molecule id="Q8IZF6-2"/>
</dbReference>
<dbReference type="ProteomicsDB" id="71347">
    <molecule id="Q8IZF6-3"/>
</dbReference>
<dbReference type="Antibodypedia" id="51733">
    <property type="antibodies" value="38 antibodies from 17 providers"/>
</dbReference>
<dbReference type="DNASU" id="139378"/>
<dbReference type="Ensembl" id="ENST00000370652.5">
    <molecule id="Q8IZF6-1"/>
    <property type="protein sequence ID" value="ENSP00000359686.1"/>
    <property type="gene ID" value="ENSG00000156920.11"/>
</dbReference>
<dbReference type="Ensembl" id="ENST00000394141.1">
    <molecule id="Q8IZF6-3"/>
    <property type="protein sequence ID" value="ENSP00000377697.1"/>
    <property type="gene ID" value="ENSG00000156920.11"/>
</dbReference>
<dbReference type="Ensembl" id="ENST00000394143.6">
    <molecule id="Q8IZF6-1"/>
    <property type="protein sequence ID" value="ENSP00000377699.1"/>
    <property type="gene ID" value="ENSG00000156920.11"/>
</dbReference>
<dbReference type="GeneID" id="139378"/>
<dbReference type="KEGG" id="hsa:139378"/>
<dbReference type="MANE-Select" id="ENST00000394143.6">
    <property type="protein sequence ID" value="ENSP00000377699.1"/>
    <property type="RefSeq nucleotide sequence ID" value="NM_153834.4"/>
    <property type="RefSeq protein sequence ID" value="NP_722576.3"/>
</dbReference>
<dbReference type="UCSC" id="uc004ezu.1">
    <molecule id="Q8IZF6-1"/>
    <property type="organism name" value="human"/>
</dbReference>
<dbReference type="AGR" id="HGNC:18992"/>
<dbReference type="CTD" id="139378"/>
<dbReference type="DisGeNET" id="139378"/>
<dbReference type="GeneCards" id="ADGRG4"/>
<dbReference type="HGNC" id="HGNC:18992">
    <property type="gene designation" value="ADGRG4"/>
</dbReference>
<dbReference type="HPA" id="ENSG00000156920">
    <property type="expression patterns" value="Tissue enhanced (fallopian tube, intestine, retina)"/>
</dbReference>
<dbReference type="MalaCards" id="ADGRG4"/>
<dbReference type="MIM" id="301085">
    <property type="type" value="gene"/>
</dbReference>
<dbReference type="neXtProt" id="NX_Q8IZF6"/>
<dbReference type="OpenTargets" id="ENSG00000156920"/>
<dbReference type="PharmGKB" id="PA134885132"/>
<dbReference type="VEuPathDB" id="HostDB:ENSG00000156920"/>
<dbReference type="eggNOG" id="KOG4193">
    <property type="taxonomic scope" value="Eukaryota"/>
</dbReference>
<dbReference type="GeneTree" id="ENSGT00940000162744"/>
<dbReference type="HOGENOM" id="CLU_000643_0_0_1"/>
<dbReference type="InParanoid" id="Q8IZF6"/>
<dbReference type="OMA" id="MMDQPQN"/>
<dbReference type="OrthoDB" id="10037534at2759"/>
<dbReference type="PAN-GO" id="Q8IZF6">
    <property type="GO annotations" value="3 GO annotations based on evolutionary models"/>
</dbReference>
<dbReference type="PhylomeDB" id="Q8IZF6"/>
<dbReference type="TreeFam" id="TF321769"/>
<dbReference type="PathwayCommons" id="Q8IZF6"/>
<dbReference type="SignaLink" id="Q8IZF6"/>
<dbReference type="BioGRID-ORCS" id="139378">
    <property type="hits" value="22 hits in 776 CRISPR screens"/>
</dbReference>
<dbReference type="ChiTaRS" id="ADGRG4">
    <property type="organism name" value="human"/>
</dbReference>
<dbReference type="GeneWiki" id="GPR112"/>
<dbReference type="GenomeRNAi" id="139378"/>
<dbReference type="Pharos" id="Q8IZF6">
    <property type="development level" value="Tdark"/>
</dbReference>
<dbReference type="PRO" id="PR:Q8IZF6"/>
<dbReference type="Proteomes" id="UP000005640">
    <property type="component" value="Chromosome X"/>
</dbReference>
<dbReference type="RNAct" id="Q8IZF6">
    <property type="molecule type" value="protein"/>
</dbReference>
<dbReference type="Bgee" id="ENSG00000156920">
    <property type="expression patterns" value="Expressed in duodenum and 40 other cell types or tissues"/>
</dbReference>
<dbReference type="GO" id="GO:0016020">
    <property type="term" value="C:membrane"/>
    <property type="evidence" value="ECO:0000304"/>
    <property type="project" value="GDB"/>
</dbReference>
<dbReference type="GO" id="GO:0005886">
    <property type="term" value="C:plasma membrane"/>
    <property type="evidence" value="ECO:0000318"/>
    <property type="project" value="GO_Central"/>
</dbReference>
<dbReference type="GO" id="GO:0004930">
    <property type="term" value="F:G protein-coupled receptor activity"/>
    <property type="evidence" value="ECO:0000314"/>
    <property type="project" value="UniProtKB"/>
</dbReference>
<dbReference type="GO" id="GO:0007189">
    <property type="term" value="P:adenylate cyclase-activating G protein-coupled receptor signaling pathway"/>
    <property type="evidence" value="ECO:0000314"/>
    <property type="project" value="UniProtKB"/>
</dbReference>
<dbReference type="GO" id="GO:0007166">
    <property type="term" value="P:cell surface receptor signaling pathway"/>
    <property type="evidence" value="ECO:0007669"/>
    <property type="project" value="InterPro"/>
</dbReference>
<dbReference type="GO" id="GO:0007186">
    <property type="term" value="P:G protein-coupled receptor signaling pathway"/>
    <property type="evidence" value="ECO:0000304"/>
    <property type="project" value="GDB"/>
</dbReference>
<dbReference type="CDD" id="cd15997">
    <property type="entry name" value="7tmB2_GPR112"/>
    <property type="match status" value="1"/>
</dbReference>
<dbReference type="FunFam" id="2.60.120.200:FF:000172">
    <property type="entry name" value="Adhesion G protein-coupled receptor G4"/>
    <property type="match status" value="1"/>
</dbReference>
<dbReference type="FunFam" id="2.60.220.50:FF:000018">
    <property type="entry name" value="Adhesion G protein-coupled receptor G6"/>
    <property type="match status" value="1"/>
</dbReference>
<dbReference type="FunFam" id="1.20.1070.10:FF:000234">
    <property type="entry name" value="adhesion G-protein coupled receptor G4"/>
    <property type="match status" value="1"/>
</dbReference>
<dbReference type="Gene3D" id="2.60.120.200">
    <property type="match status" value="1"/>
</dbReference>
<dbReference type="Gene3D" id="2.60.220.50">
    <property type="match status" value="1"/>
</dbReference>
<dbReference type="Gene3D" id="4.10.1240.10">
    <property type="entry name" value="GPCR, family 2, extracellular hormone receptor domain"/>
    <property type="match status" value="1"/>
</dbReference>
<dbReference type="Gene3D" id="1.20.1070.10">
    <property type="entry name" value="Rhodopsin 7-helix transmembrane proteins"/>
    <property type="match status" value="1"/>
</dbReference>
<dbReference type="InterPro" id="IPR013320">
    <property type="entry name" value="ConA-like_dom_sf"/>
</dbReference>
<dbReference type="InterPro" id="IPR057244">
    <property type="entry name" value="GAIN_B"/>
</dbReference>
<dbReference type="InterPro" id="IPR046338">
    <property type="entry name" value="GAIN_dom_sf"/>
</dbReference>
<dbReference type="InterPro" id="IPR017981">
    <property type="entry name" value="GPCR_2-like_7TM"/>
</dbReference>
<dbReference type="InterPro" id="IPR036445">
    <property type="entry name" value="GPCR_2_extracell_dom_sf"/>
</dbReference>
<dbReference type="InterPro" id="IPR000832">
    <property type="entry name" value="GPCR_2_secretin-like"/>
</dbReference>
<dbReference type="InterPro" id="IPR017983">
    <property type="entry name" value="GPCR_2_secretin-like_CS"/>
</dbReference>
<dbReference type="InterPro" id="IPR000203">
    <property type="entry name" value="GPS"/>
</dbReference>
<dbReference type="InterPro" id="IPR001759">
    <property type="entry name" value="Pentraxin-related"/>
</dbReference>
<dbReference type="PANTHER" id="PTHR12011">
    <property type="entry name" value="ADHESION G-PROTEIN COUPLED RECEPTOR"/>
    <property type="match status" value="1"/>
</dbReference>
<dbReference type="PANTHER" id="PTHR12011:SF277">
    <property type="entry name" value="ADHESION G-PROTEIN COUPLED RECEPTOR G4"/>
    <property type="match status" value="1"/>
</dbReference>
<dbReference type="Pfam" id="PF00002">
    <property type="entry name" value="7tm_2"/>
    <property type="match status" value="1"/>
</dbReference>
<dbReference type="Pfam" id="PF01825">
    <property type="entry name" value="GPS"/>
    <property type="match status" value="1"/>
</dbReference>
<dbReference type="Pfam" id="PF00354">
    <property type="entry name" value="Pentaxin"/>
    <property type="match status" value="1"/>
</dbReference>
<dbReference type="PRINTS" id="PR00249">
    <property type="entry name" value="GPCRSECRETIN"/>
</dbReference>
<dbReference type="SMART" id="SM00303">
    <property type="entry name" value="GPS"/>
    <property type="match status" value="1"/>
</dbReference>
<dbReference type="SMART" id="SM00159">
    <property type="entry name" value="PTX"/>
    <property type="match status" value="1"/>
</dbReference>
<dbReference type="SUPFAM" id="SSF49899">
    <property type="entry name" value="Concanavalin A-like lectins/glucanases"/>
    <property type="match status" value="1"/>
</dbReference>
<dbReference type="SUPFAM" id="SSF81321">
    <property type="entry name" value="Family A G protein-coupled receptor-like"/>
    <property type="match status" value="1"/>
</dbReference>
<dbReference type="PROSITE" id="PS00650">
    <property type="entry name" value="G_PROTEIN_RECEP_F2_2"/>
    <property type="match status" value="1"/>
</dbReference>
<dbReference type="PROSITE" id="PS50261">
    <property type="entry name" value="G_PROTEIN_RECEP_F2_4"/>
    <property type="match status" value="1"/>
</dbReference>
<dbReference type="PROSITE" id="PS50221">
    <property type="entry name" value="GAIN_B"/>
    <property type="match status" value="1"/>
</dbReference>
<dbReference type="PROSITE" id="PS51828">
    <property type="entry name" value="PTX_2"/>
    <property type="match status" value="1"/>
</dbReference>
<evidence type="ECO:0000250" key="1">
    <source>
        <dbReference type="UniProtKB" id="Q8CJ12"/>
    </source>
</evidence>
<evidence type="ECO:0000255" key="2"/>
<evidence type="ECO:0000255" key="3">
    <source>
        <dbReference type="PROSITE-ProRule" id="PRU00098"/>
    </source>
</evidence>
<evidence type="ECO:0000255" key="4">
    <source>
        <dbReference type="PROSITE-ProRule" id="PRU01172"/>
    </source>
</evidence>
<evidence type="ECO:0000256" key="5">
    <source>
        <dbReference type="SAM" id="MobiDB-lite"/>
    </source>
</evidence>
<evidence type="ECO:0000269" key="6">
    <source>
    </source>
</evidence>
<evidence type="ECO:0000269" key="7">
    <source>
    </source>
</evidence>
<evidence type="ECO:0000269" key="8">
    <source>
    </source>
</evidence>
<evidence type="ECO:0000269" key="9">
    <source ref="2"/>
</evidence>
<evidence type="ECO:0000303" key="10">
    <source>
    </source>
</evidence>
<evidence type="ECO:0000303" key="11">
    <source>
    </source>
</evidence>
<evidence type="ECO:0000303" key="12">
    <source>
    </source>
</evidence>
<evidence type="ECO:0000305" key="13"/>
<evidence type="ECO:0000312" key="14">
    <source>
        <dbReference type="HGNC" id="HGNC:18992"/>
    </source>
</evidence>
<evidence type="ECO:0007744" key="15">
    <source>
        <dbReference type="PDB" id="7WUJ"/>
    </source>
</evidence>
<evidence type="ECO:0007744" key="16">
    <source>
        <dbReference type="PDB" id="8B55"/>
    </source>
</evidence>
<evidence type="ECO:0007829" key="17">
    <source>
        <dbReference type="PDB" id="7WUJ"/>
    </source>
</evidence>
<evidence type="ECO:0007829" key="18">
    <source>
        <dbReference type="PDB" id="8B55"/>
    </source>
</evidence>
<sequence length="3080" mass="333368">MKEHIIYQKLYGLILMSSFIFLSDTLSLKGKKLDFFGRGDTYVSLIDTIPELSRFTACIDLVFMDDNSRYWMAFSYITNNALLGREDIDLGLAGDHQQLILYRLGKTFSIRHHLASFQWHTICLIWDGVKGKLELFLNKERILEVTDQPHNLTPHGTLFLGHFLKNESSEVKSMMRSFPGSLYYFQLWDHILENEEFMKCLDGNIVSWEEDVWLVNKIIPTVDRTLRCFVPENMTIQEKSTTVSQQIDMTTPSQITGVKPQNTAHSSTLLSQSIPIFATDYTTISYSNTTSPPLETMTAQKILKTLVDETATFAVDVLSTSSAISLPTQSISIDNTTNSMKKTKSPSSESTKTTKMVEAMATEIFQPPTPSNFLSTSRFTKNSVVSTTSAIKSQSAVTKTTSLFSTIESTSMSTTPCLKQKSTNTGALPISTAGQEFIESTAAGTVPWFTVEKTSPASTHVGTASSFPPEPVLISTAAPVDSVFPRNQTAFPLATTDMKIAFTVHSLTLPTRLIETTPAPRTAETELTSTNFQDVSLPRVEDAMSTSMSKETSSKTFSFLTSFSFTGTESVQTVIDAEATRTALTPEITLASTVAETMLSSTITGRVYTQNTPTADGHLLTLMSTRSASTSKAPESGPTSTTDEAAHLFSSNETIWTSRPDQALLASMNTTTILTFVPNENFTSAFHENTTYTEYLSATTNITPLKASPEGKGTTANDATTARYTTAVSKLTSPWFANFSIVSGTTSITNMPEFKLTTLLLKTIPMSTKPANELPLTPRETVVPSVDIISTLACIQPNFSTEESASETTQTEINGAIVFGGTTTPVPKSATTQRLNATVTRKEATSHYLMRKSTIAAVAEVSPFSTMLEVTDESAQRVTASVTVSSFPDIEKLSTPLDNKTATTEVRESWLLTKLVKTTPRSSYNEMTEMFNFNHTYVAHWTSETSEGISAGSPTSGSTHIFGEPLGASTTRISETSFSTTPTDRTATSLSDGILPPQPTAAHSSATPVPVTHMFSLPVNGSSVVAEETEVTMSEPSTLARAFSTSVLSDVSNLSSTTMTTALVPPLDQTASTTIVIVPTHGDLIRTTSEATVISVRKTSMAVPSLTETPFHSLRLSTPVTAKAETTLFSTSVDTVTPSTHTLVCSKPPPDNIPPASSTHVISTTSTPEATQPISQVEETSTYALSFPYTFSGGGVVASLATGTTETSVVDETTPSHISANKLTTSVNSHISSSATYRVHTPVSIQLVTSTSVLSSDKDQMTISLGKTPRTMEVTEMSPSKNSFISYSRGTPSLEMTDTGFPETTKISSHQTHSPSEIPLGTPSDGNLASSPTSGSTQITPTLTSSNTVGVHIPEMSTSLGKTALPSQALTITTFLCPEKESTSALPAYTPRTVEMIVNSTYVTHSVSYGQDTSFVDTTTSSSTRISNPMDINTTFSHLHSLRTQPEVTSVASFISESTQTFPESLSLSTAGLYNDGFTVLSDRITTAFSVPNVPTMLPRESSMATSTPIYQMSSLPVNVTAFTSKKVSDTPPIVITKSSKTMHPGCLKSPCTATSGPMSEMSSIPVNNSAFTPATVSSDTSTRVGLFSTLLSSVTPRTTMTMQTSTLDVTPVIYAGATSKNKMVSSAFTTEMIEAPSRITPTTFLSPTEPTLPFVKTVPTTIMAGIVTPFVGTTAFSPLSSKSTGAISSIPKTTFSPFLSATQQSSQADEATTLGILSGITNRSLSTVNSGTGVALTDTYSRITVPENMLSPTHADSLHTSFNIQVSPSLTSFKSASGPTKNVKTTTNCFSSNTRKMTSLLEKTSLTNYATSLNTPVSYPPWTPSSATLPSLTSFVYSPHSTEAEISTPKTSPPPTSQMVEFPVLGTRMTSSNTQPLLMTSWNIPTAEGSQFPISTTINVPTSNEMETETLHLVPGPLSTFTASQTGLVSKDVMAMSSIPMSGILPNHGLSENPSLSTSLRAITSTLADVKHTFEKMTTSVTPGTTLPSILSGATSGSVISKSPILTWLLSSLPSGSPPATVSNAPHVMTSSTVEVSKSTFLTSDMISAHPFTNLTTLPSATMSTILTRTIPTPTLGGITTGFPTSLPMSINVTDDIVYISTHPEASSRTTITANPRTVSHPSSFSRKTMSPSTTDHTLSVGAMPLPSSTITSSWNRIPTASSPSTLIIPKPTLDSLLNIMTTTSTVPGASFPLISTGVTYPFTATVSSPISSFFETTWLDSTPSFLSTEASTSPTATKSTVSFYNVEMSFSVFVEEPRIPITSVINEFTENSLNSIFQNSEFSLATLETQIKSRDISEEEMVMDRAILEQREGQEMATISYVPYSCVCQVIIKASSSLASSELMRKIKSKIHGNFTHGNFTQDQLTLLVNCEHVAVKKLEPGNCKADETASKYKGTYKWLLTNPTETAQTRCIKNEDGNATRFCSISINTGKSQWEKPKFKQCKLLQELPDKIVDLANITISDENAEDVAEHILNLINESPALGKEETKIIVSKISDISQCDEISMNLTHVMLQIINVVLEKQNNSASDLHEISNEILRIIERTGHKMEFSGQIANLTVAGLALAVLRGDHTFDGMAFSIHSYEEGTDPEIFLGNVPVGGILASIYLPKSLTERIPLSNLQTILFNFFGQTSLFKTKNVTKALTTYVVSASISDDMFIQNLADPVVITLQHIGGNQNYGQVHCAFWDFENNNGLGGWNSSGCKVKETNVNYTICQCDHLTHFGVLMDLSRSTVDSVNEQILALITYTGCGISSIFLGVAVVTYIAFHKLRKDYPAKILINLCTALLMLNLVFLINSWLSSFQKVGVCITAAVALHYFLLVSFTWMGLEAVHMYLALVKVFNIYIPNYILKFCLVGWGIPAIMVAITVSVKKDLYGTLSPTTPFCWIKDDSIFYISVVAYFCLIFLMNLSMFCTVLVQLNSVKSQIQKTRRKMILHDLKGTMSLTFLLGLTWGFAFFAWGPMRNFFLYLFAIFNTLQGFFIFVFHCVMKESVREQWQIHLCCGWLRLDNSSDGSSRCQIKVGYKQEGLKKIFEHKLLTPSLKSTATSSTFKSLGSAQGTPSEISFPNDDFDKDPYCSSP</sequence>
<proteinExistence type="evidence at protein level"/>
<name>AGRG4_HUMAN</name>
<protein>
    <recommendedName>
        <fullName evidence="11">Adhesion G-protein coupled receptor G4</fullName>
    </recommendedName>
    <alternativeName>
        <fullName evidence="12">G-protein coupled receptor 112</fullName>
    </alternativeName>
    <component>
        <recommendedName>
            <fullName evidence="13">Adhesion G-protein coupled receptor G4, N-terminal fragment</fullName>
            <shortName evidence="13">ADGRG4 N-terminal fragment</shortName>
        </recommendedName>
    </component>
    <component>
        <recommendedName>
            <fullName evidence="13">Adhesion G-protein coupled receptor G4, C-terminal fragment</fullName>
            <shortName evidence="13">ADGRG4 C-terminal fragment</shortName>
        </recommendedName>
    </component>
</protein>
<reference key="1">
    <citation type="journal article" date="2002" name="FEBS Lett.">
        <title>Novel human G protein-coupled receptors with long N-terminals containing GPS domains and Ser/Thr-rich regions.</title>
        <authorList>
            <person name="Fredriksson R."/>
            <person name="Lagerstroem M.C."/>
            <person name="Hoeglund P.J."/>
            <person name="Schioeth H.B."/>
        </authorList>
    </citation>
    <scope>NUCLEOTIDE SEQUENCE [MRNA] (ISOFORM 2)</scope>
</reference>
<reference key="2">
    <citation type="submission" date="2005-01" db="EMBL/GenBank/DDBJ databases">
        <authorList>
            <person name="Bonner T.I."/>
            <person name="Kauffman D."/>
            <person name="Nagle J.W."/>
            <person name="Sloger M."/>
            <person name="Kozhich O."/>
        </authorList>
    </citation>
    <scope>NUCLEOTIDE SEQUENCE [MRNA] (ISOFORM 1)</scope>
    <scope>VARIANTS MET-276 AND HIS-368</scope>
    <source>
        <tissue>Retina</tissue>
    </source>
</reference>
<reference key="3">
    <citation type="journal article" date="2005" name="Nature">
        <title>The DNA sequence of the human X chromosome.</title>
        <authorList>
            <person name="Ross M.T."/>
            <person name="Grafham D.V."/>
            <person name="Coffey A.J."/>
            <person name="Scherer S."/>
            <person name="McLay K."/>
            <person name="Muzny D."/>
            <person name="Platzer M."/>
            <person name="Howell G.R."/>
            <person name="Burrows C."/>
            <person name="Bird C.P."/>
            <person name="Frankish A."/>
            <person name="Lovell F.L."/>
            <person name="Howe K.L."/>
            <person name="Ashurst J.L."/>
            <person name="Fulton R.S."/>
            <person name="Sudbrak R."/>
            <person name="Wen G."/>
            <person name="Jones M.C."/>
            <person name="Hurles M.E."/>
            <person name="Andrews T.D."/>
            <person name="Scott C.E."/>
            <person name="Searle S."/>
            <person name="Ramser J."/>
            <person name="Whittaker A."/>
            <person name="Deadman R."/>
            <person name="Carter N.P."/>
            <person name="Hunt S.E."/>
            <person name="Chen R."/>
            <person name="Cree A."/>
            <person name="Gunaratne P."/>
            <person name="Havlak P."/>
            <person name="Hodgson A."/>
            <person name="Metzker M.L."/>
            <person name="Richards S."/>
            <person name="Scott G."/>
            <person name="Steffen D."/>
            <person name="Sodergren E."/>
            <person name="Wheeler D.A."/>
            <person name="Worley K.C."/>
            <person name="Ainscough R."/>
            <person name="Ambrose K.D."/>
            <person name="Ansari-Lari M.A."/>
            <person name="Aradhya S."/>
            <person name="Ashwell R.I."/>
            <person name="Babbage A.K."/>
            <person name="Bagguley C.L."/>
            <person name="Ballabio A."/>
            <person name="Banerjee R."/>
            <person name="Barker G.E."/>
            <person name="Barlow K.F."/>
            <person name="Barrett I.P."/>
            <person name="Bates K.N."/>
            <person name="Beare D.M."/>
            <person name="Beasley H."/>
            <person name="Beasley O."/>
            <person name="Beck A."/>
            <person name="Bethel G."/>
            <person name="Blechschmidt K."/>
            <person name="Brady N."/>
            <person name="Bray-Allen S."/>
            <person name="Bridgeman A.M."/>
            <person name="Brown A.J."/>
            <person name="Brown M.J."/>
            <person name="Bonnin D."/>
            <person name="Bruford E.A."/>
            <person name="Buhay C."/>
            <person name="Burch P."/>
            <person name="Burford D."/>
            <person name="Burgess J."/>
            <person name="Burrill W."/>
            <person name="Burton J."/>
            <person name="Bye J.M."/>
            <person name="Carder C."/>
            <person name="Carrel L."/>
            <person name="Chako J."/>
            <person name="Chapman J.C."/>
            <person name="Chavez D."/>
            <person name="Chen E."/>
            <person name="Chen G."/>
            <person name="Chen Y."/>
            <person name="Chen Z."/>
            <person name="Chinault C."/>
            <person name="Ciccodicola A."/>
            <person name="Clark S.Y."/>
            <person name="Clarke G."/>
            <person name="Clee C.M."/>
            <person name="Clegg S."/>
            <person name="Clerc-Blankenburg K."/>
            <person name="Clifford K."/>
            <person name="Cobley V."/>
            <person name="Cole C.G."/>
            <person name="Conquer J.S."/>
            <person name="Corby N."/>
            <person name="Connor R.E."/>
            <person name="David R."/>
            <person name="Davies J."/>
            <person name="Davis C."/>
            <person name="Davis J."/>
            <person name="Delgado O."/>
            <person name="Deshazo D."/>
            <person name="Dhami P."/>
            <person name="Ding Y."/>
            <person name="Dinh H."/>
            <person name="Dodsworth S."/>
            <person name="Draper H."/>
            <person name="Dugan-Rocha S."/>
            <person name="Dunham A."/>
            <person name="Dunn M."/>
            <person name="Durbin K.J."/>
            <person name="Dutta I."/>
            <person name="Eades T."/>
            <person name="Ellwood M."/>
            <person name="Emery-Cohen A."/>
            <person name="Errington H."/>
            <person name="Evans K.L."/>
            <person name="Faulkner L."/>
            <person name="Francis F."/>
            <person name="Frankland J."/>
            <person name="Fraser A.E."/>
            <person name="Galgoczy P."/>
            <person name="Gilbert J."/>
            <person name="Gill R."/>
            <person name="Gloeckner G."/>
            <person name="Gregory S.G."/>
            <person name="Gribble S."/>
            <person name="Griffiths C."/>
            <person name="Grocock R."/>
            <person name="Gu Y."/>
            <person name="Gwilliam R."/>
            <person name="Hamilton C."/>
            <person name="Hart E.A."/>
            <person name="Hawes A."/>
            <person name="Heath P.D."/>
            <person name="Heitmann K."/>
            <person name="Hennig S."/>
            <person name="Hernandez J."/>
            <person name="Hinzmann B."/>
            <person name="Ho S."/>
            <person name="Hoffs M."/>
            <person name="Howden P.J."/>
            <person name="Huckle E.J."/>
            <person name="Hume J."/>
            <person name="Hunt P.J."/>
            <person name="Hunt A.R."/>
            <person name="Isherwood J."/>
            <person name="Jacob L."/>
            <person name="Johnson D."/>
            <person name="Jones S."/>
            <person name="de Jong P.J."/>
            <person name="Joseph S.S."/>
            <person name="Keenan S."/>
            <person name="Kelly S."/>
            <person name="Kershaw J.K."/>
            <person name="Khan Z."/>
            <person name="Kioschis P."/>
            <person name="Klages S."/>
            <person name="Knights A.J."/>
            <person name="Kosiura A."/>
            <person name="Kovar-Smith C."/>
            <person name="Laird G.K."/>
            <person name="Langford C."/>
            <person name="Lawlor S."/>
            <person name="Leversha M."/>
            <person name="Lewis L."/>
            <person name="Liu W."/>
            <person name="Lloyd C."/>
            <person name="Lloyd D.M."/>
            <person name="Loulseged H."/>
            <person name="Loveland J.E."/>
            <person name="Lovell J.D."/>
            <person name="Lozado R."/>
            <person name="Lu J."/>
            <person name="Lyne R."/>
            <person name="Ma J."/>
            <person name="Maheshwari M."/>
            <person name="Matthews L.H."/>
            <person name="McDowall J."/>
            <person name="McLaren S."/>
            <person name="McMurray A."/>
            <person name="Meidl P."/>
            <person name="Meitinger T."/>
            <person name="Milne S."/>
            <person name="Miner G."/>
            <person name="Mistry S.L."/>
            <person name="Morgan M."/>
            <person name="Morris S."/>
            <person name="Mueller I."/>
            <person name="Mullikin J.C."/>
            <person name="Nguyen N."/>
            <person name="Nordsiek G."/>
            <person name="Nyakatura G."/>
            <person name="O'dell C.N."/>
            <person name="Okwuonu G."/>
            <person name="Palmer S."/>
            <person name="Pandian R."/>
            <person name="Parker D."/>
            <person name="Parrish J."/>
            <person name="Pasternak S."/>
            <person name="Patel D."/>
            <person name="Pearce A.V."/>
            <person name="Pearson D.M."/>
            <person name="Pelan S.E."/>
            <person name="Perez L."/>
            <person name="Porter K.M."/>
            <person name="Ramsey Y."/>
            <person name="Reichwald K."/>
            <person name="Rhodes S."/>
            <person name="Ridler K.A."/>
            <person name="Schlessinger D."/>
            <person name="Schueler M.G."/>
            <person name="Sehra H.K."/>
            <person name="Shaw-Smith C."/>
            <person name="Shen H."/>
            <person name="Sheridan E.M."/>
            <person name="Shownkeen R."/>
            <person name="Skuce C.D."/>
            <person name="Smith M.L."/>
            <person name="Sotheran E.C."/>
            <person name="Steingruber H.E."/>
            <person name="Steward C.A."/>
            <person name="Storey R."/>
            <person name="Swann R.M."/>
            <person name="Swarbreck D."/>
            <person name="Tabor P.E."/>
            <person name="Taudien S."/>
            <person name="Taylor T."/>
            <person name="Teague B."/>
            <person name="Thomas K."/>
            <person name="Thorpe A."/>
            <person name="Timms K."/>
            <person name="Tracey A."/>
            <person name="Trevanion S."/>
            <person name="Tromans A.C."/>
            <person name="d'Urso M."/>
            <person name="Verduzco D."/>
            <person name="Villasana D."/>
            <person name="Waldron L."/>
            <person name="Wall M."/>
            <person name="Wang Q."/>
            <person name="Warren J."/>
            <person name="Warry G.L."/>
            <person name="Wei X."/>
            <person name="West A."/>
            <person name="Whitehead S.L."/>
            <person name="Whiteley M.N."/>
            <person name="Wilkinson J.E."/>
            <person name="Willey D.L."/>
            <person name="Williams G."/>
            <person name="Williams L."/>
            <person name="Williamson A."/>
            <person name="Williamson H."/>
            <person name="Wilming L."/>
            <person name="Woodmansey R.L."/>
            <person name="Wray P.W."/>
            <person name="Yen J."/>
            <person name="Zhang J."/>
            <person name="Zhou J."/>
            <person name="Zoghbi H."/>
            <person name="Zorilla S."/>
            <person name="Buck D."/>
            <person name="Reinhardt R."/>
            <person name="Poustka A."/>
            <person name="Rosenthal A."/>
            <person name="Lehrach H."/>
            <person name="Meindl A."/>
            <person name="Minx P.J."/>
            <person name="Hillier L.W."/>
            <person name="Willard H.F."/>
            <person name="Wilson R.K."/>
            <person name="Waterston R.H."/>
            <person name="Rice C.M."/>
            <person name="Vaudin M."/>
            <person name="Coulson A."/>
            <person name="Nelson D.L."/>
            <person name="Weinstock G."/>
            <person name="Sulston J.E."/>
            <person name="Durbin R.M."/>
            <person name="Hubbard T."/>
            <person name="Gibbs R.A."/>
            <person name="Beck S."/>
            <person name="Rogers J."/>
            <person name="Bentley D.R."/>
        </authorList>
    </citation>
    <scope>NUCLEOTIDE SEQUENCE [LARGE SCALE GENOMIC DNA]</scope>
</reference>
<reference key="4">
    <citation type="journal article" date="2003" name="Proc. Natl. Acad. Sci. U.S.A.">
        <title>The G protein-coupled receptor repertoires of human and mouse.</title>
        <authorList>
            <person name="Vassilatis D.K."/>
            <person name="Hohmann J.G."/>
            <person name="Zeng H."/>
            <person name="Li F."/>
            <person name="Ranchalis J.E."/>
            <person name="Mortrud M.T."/>
            <person name="Brown A."/>
            <person name="Rodriguez S.S."/>
            <person name="Weller J.R."/>
            <person name="Wright A.C."/>
            <person name="Bergmann J.E."/>
            <person name="Gaitanaris G.A."/>
        </authorList>
    </citation>
    <scope>NUCLEOTIDE SEQUENCE [LARGE SCALE MRNA] OF 343-1613 (ISOFORMS 1/2)</scope>
</reference>
<reference key="5">
    <citation type="journal article" date="2009" name="Mod. Pathol.">
        <title>Novel markers for enterochromaffin cells and gastrointestinal neuroendocrine carcinomas.</title>
        <authorList>
            <person name="Leja J."/>
            <person name="Essaghir A."/>
            <person name="Essand M."/>
            <person name="Wester K."/>
            <person name="Oeberg K."/>
            <person name="Toetterman T.H."/>
            <person name="Lloyd R."/>
            <person name="Vasmatzis G."/>
            <person name="Demoulin J.-B."/>
            <person name="Giandomenico V."/>
        </authorList>
    </citation>
    <scope>TISSUE SPECIFICITY</scope>
</reference>
<reference key="6">
    <citation type="journal article" date="2015" name="Pharmacol. Rev.">
        <title>International union of basic and clinical pharmacology. XCIV. Adhesion G protein-coupled receptors.</title>
        <authorList>
            <person name="Hamann J."/>
            <person name="Aust G."/>
            <person name="Arac D."/>
            <person name="Engel F.B."/>
            <person name="Formstone C."/>
            <person name="Fredriksson R."/>
            <person name="Hall R.A."/>
            <person name="Harty B.L."/>
            <person name="Kirchhoff C."/>
            <person name="Knapp B."/>
            <person name="Krishnan A."/>
            <person name="Liebscher I."/>
            <person name="Lin H.H."/>
            <person name="Martinelli D.C."/>
            <person name="Monk K.R."/>
            <person name="Peeters M.C."/>
            <person name="Piao X."/>
            <person name="Promel S."/>
            <person name="Schoneberg T."/>
            <person name="Schwartz T.W."/>
            <person name="Singer K."/>
            <person name="Stacey M."/>
            <person name="Ushkaryov Y.A."/>
            <person name="Vallon M."/>
            <person name="Wolfrum U."/>
            <person name="Wright M.W."/>
            <person name="Xu L."/>
            <person name="Langenhan T."/>
            <person name="Schioth H.B."/>
        </authorList>
    </citation>
    <scope>NOMENCLATURE</scope>
</reference>
<reference evidence="15" key="7">
    <citation type="journal article" date="2022" name="Nature">
        <title>Tethered peptide activation mechanism of the adhesion GPCRs ADGRG2 and ADGRG4.</title>
        <authorList>
            <person name="Xiao P."/>
            <person name="Guo S."/>
            <person name="Wen X."/>
            <person name="He Q.T."/>
            <person name="Lin H."/>
            <person name="Huang S.M."/>
            <person name="Gou L."/>
            <person name="Zhang C."/>
            <person name="Yang Z."/>
            <person name="Zhong Y.N."/>
            <person name="Yang C.C."/>
            <person name="Li Y."/>
            <person name="Gong Z."/>
            <person name="Tao X.N."/>
            <person name="Yang Z.S."/>
            <person name="Lu Y."/>
            <person name="Li S.L."/>
            <person name="He J.Y."/>
            <person name="Wang C."/>
            <person name="Zhang L."/>
            <person name="Kong L."/>
            <person name="Sun J.P."/>
            <person name="Yu X."/>
        </authorList>
    </citation>
    <scope>STRUCTURE BY ELECTRON MICROSCOPY (3.30 ANGSTROMS) OF 2720-3080 IN COMPLEX WITH GNAS; GNB1 AND GNG2</scope>
    <scope>FUNCTION</scope>
    <scope>ACTIVITY REGULATION</scope>
    <scope>DOMAIN</scope>
    <scope>DISULFIDE BOND</scope>
    <scope>MUTAGENESIS OF ILE-2660; LEU-2671; VAL-2683; THR-2747; PHE-2794; LEU-2820; PHE-2885; TRP-2953; PHE-2957 AND PHE-2971</scope>
</reference>
<reference evidence="16" key="8">
    <citation type="journal article" date="2023" name="J. Biol. Chem.">
        <title>The dimerized pentraxin-like domain of the adhesion G protein-coupled receptor 112 (ADGRG4) suggests function in sensing mechanical forces.</title>
        <authorList>
            <person name="Kieslich B."/>
            <person name="Weisse R.H."/>
            <person name="Brendler J."/>
            <person name="Ricken A."/>
            <person name="Schoneberg T."/>
            <person name="Strater N."/>
        </authorList>
    </citation>
    <scope>X-RAY CRYSTALLOGRAPHY (1.36 ANGSTROMS) OF 26-240 IN COMPLEX WITH MG(2+)</scope>
    <scope>DISULFIDE BOND</scope>
    <scope>FUNCTION</scope>
    <scope>SUBUNIT</scope>
    <scope>GLYCOSYLATION</scope>
</reference>
<keyword id="KW-0002">3D-structure</keyword>
<keyword id="KW-0025">Alternative splicing</keyword>
<keyword id="KW-1015">Disulfide bond</keyword>
<keyword id="KW-0297">G-protein coupled receptor</keyword>
<keyword id="KW-0325">Glycoprotein</keyword>
<keyword id="KW-0472">Membrane</keyword>
<keyword id="KW-0675">Receptor</keyword>
<keyword id="KW-1185">Reference proteome</keyword>
<keyword id="KW-0732">Signal</keyword>
<keyword id="KW-0807">Transducer</keyword>
<keyword id="KW-0812">Transmembrane</keyword>
<keyword id="KW-1133">Transmembrane helix</keyword>
<accession>Q8IZF6</accession>
<accession>A2A2J1</accession>
<accession>A2A2J2</accession>
<accession>Q5EGP2</accession>
<accession>Q86SM6</accession>
<feature type="signal peptide" evidence="2">
    <location>
        <begin position="1"/>
        <end position="27"/>
    </location>
</feature>
<feature type="chain" id="PRO_0000070335" description="Adhesion G-protein coupled receptor G4">
    <location>
        <begin position="28"/>
        <end position="3080"/>
    </location>
</feature>
<feature type="chain" id="PRO_0000462387" description="Adhesion G-protein coupled receptor G4, N-terminal fragment" evidence="13">
    <location>
        <begin position="28"/>
        <end position="2721"/>
    </location>
</feature>
<feature type="chain" id="PRO_0000462388" description="Adhesion G-protein coupled receptor G4, C-terminal fragment" evidence="13">
    <location>
        <begin position="2722"/>
        <end position="3080"/>
    </location>
</feature>
<feature type="topological domain" description="Extracellular" evidence="7 15">
    <location>
        <begin position="28"/>
        <end position="2740"/>
    </location>
</feature>
<feature type="transmembrane region" description="Helical; Name=1" evidence="7 15">
    <location>
        <begin position="2741"/>
        <end position="2766"/>
    </location>
</feature>
<feature type="topological domain" description="Cytoplasmic" evidence="7 15">
    <location>
        <begin position="2767"/>
        <end position="2777"/>
    </location>
</feature>
<feature type="transmembrane region" description="Helical; Name=2" evidence="7 15">
    <location>
        <begin position="2778"/>
        <end position="2800"/>
    </location>
</feature>
<feature type="topological domain" description="Extracellular" evidence="7 15">
    <location>
        <begin position="2801"/>
        <end position="2806"/>
    </location>
</feature>
<feature type="transmembrane region" description="Helical; Name=3" evidence="7 15">
    <location>
        <begin position="2807"/>
        <end position="2835"/>
    </location>
</feature>
<feature type="topological domain" description="Cytoplasmic" evidence="7 15">
    <location>
        <begin position="2836"/>
        <end position="2849"/>
    </location>
</feature>
<feature type="transmembrane region" description="Helical; Name=4" evidence="7 15">
    <location>
        <begin position="2850"/>
        <end position="2870"/>
    </location>
</feature>
<feature type="topological domain" description="Extracellular" evidence="7 15">
    <location>
        <begin position="2871"/>
        <end position="2892"/>
    </location>
</feature>
<feature type="transmembrane region" description="Helical; Name=5" evidence="7 15">
    <location>
        <begin position="2893"/>
        <end position="2918"/>
    </location>
</feature>
<feature type="topological domain" description="Cytoplasmic" evidence="7 15">
    <location>
        <begin position="2919"/>
        <end position="2937"/>
    </location>
</feature>
<feature type="transmembrane region" description="Helical; Name=6" evidence="7 15">
    <location>
        <begin position="2938"/>
        <end position="2961"/>
    </location>
</feature>
<feature type="topological domain" description="Extracellular" evidence="7 15">
    <location>
        <begin position="2962"/>
        <end position="2965"/>
    </location>
</feature>
<feature type="transmembrane region" description="Helical; Name=7" evidence="7 15">
    <location>
        <begin position="2966"/>
        <end position="2989"/>
    </location>
</feature>
<feature type="topological domain" description="Cytoplasmic" evidence="7 15">
    <location>
        <begin position="2990"/>
        <end position="3080"/>
    </location>
</feature>
<feature type="domain" description="Pentraxin (PTX)" evidence="4">
    <location>
        <begin position="29"/>
        <end position="228"/>
    </location>
</feature>
<feature type="domain" description="GAIN-B" evidence="3">
    <location>
        <begin position="2578"/>
        <end position="2734"/>
    </location>
</feature>
<feature type="region of interest" description="Disordered" evidence="5">
    <location>
        <begin position="946"/>
        <end position="965"/>
    </location>
</feature>
<feature type="region of interest" description="Disordered" evidence="5">
    <location>
        <begin position="1274"/>
        <end position="1348"/>
    </location>
</feature>
<feature type="region of interest" description="Disordered" evidence="5">
    <location>
        <begin position="2109"/>
        <end position="2141"/>
    </location>
</feature>
<feature type="region of interest" description="GPS" evidence="3">
    <location>
        <begin position="2685"/>
        <end position="2734"/>
    </location>
</feature>
<feature type="region of interest" description="Stachel" evidence="7">
    <location>
        <begin position="2723"/>
        <end position="2734"/>
    </location>
</feature>
<feature type="region of interest" description="Disordered" evidence="5">
    <location>
        <begin position="3051"/>
        <end position="3080"/>
    </location>
</feature>
<feature type="compositionally biased region" description="Polar residues" evidence="5">
    <location>
        <begin position="946"/>
        <end position="959"/>
    </location>
</feature>
<feature type="compositionally biased region" description="Polar residues" evidence="5">
    <location>
        <begin position="1277"/>
        <end position="1296"/>
    </location>
</feature>
<feature type="compositionally biased region" description="Polar residues" evidence="5">
    <location>
        <begin position="1305"/>
        <end position="1315"/>
    </location>
</feature>
<feature type="compositionally biased region" description="Polar residues" evidence="5">
    <location>
        <begin position="1324"/>
        <end position="1348"/>
    </location>
</feature>
<feature type="compositionally biased region" description="Polar residues" evidence="5">
    <location>
        <begin position="2109"/>
        <end position="2139"/>
    </location>
</feature>
<feature type="compositionally biased region" description="Polar residues" evidence="5">
    <location>
        <begin position="3051"/>
        <end position="3065"/>
    </location>
</feature>
<feature type="binding site" evidence="8 16">
    <location>
        <position position="202"/>
    </location>
    <ligand>
        <name>Mg(2+)</name>
        <dbReference type="ChEBI" id="CHEBI:18420"/>
    </ligand>
</feature>
<feature type="site" description="Cleavage; by autolysis" evidence="3">
    <location>
        <begin position="2721"/>
        <end position="2722"/>
    </location>
</feature>
<feature type="glycosylation site" description="N-linked (GlcNAc...) asparagine" evidence="2">
    <location>
        <position position="233"/>
    </location>
</feature>
<feature type="glycosylation site" description="N-linked (GlcNAc...) asparagine" evidence="2">
    <location>
        <position position="487"/>
    </location>
</feature>
<feature type="glycosylation site" description="N-linked (GlcNAc...) asparagine" evidence="2">
    <location>
        <position position="836"/>
    </location>
</feature>
<feature type="glycosylation site" description="N-linked (GlcNAc...) asparagine" evidence="2">
    <location>
        <position position="899"/>
    </location>
</feature>
<feature type="glycosylation site" description="N-linked (GlcNAc...) asparagine" evidence="2">
    <location>
        <position position="1020"/>
    </location>
</feature>
<feature type="glycosylation site" description="N-linked (GlcNAc...) asparagine" evidence="2">
    <location>
        <position position="1519"/>
    </location>
</feature>
<feature type="glycosylation site" description="N-linked (GlcNAc...) asparagine" evidence="2">
    <location>
        <position position="2361"/>
    </location>
</feature>
<feature type="glycosylation site" description="N-linked (GlcNAc...) asparagine" evidence="2">
    <location>
        <position position="2640"/>
    </location>
</feature>
<feature type="disulfide bond" evidence="4 8 16">
    <location>
        <begin position="58"/>
        <end position="123"/>
    </location>
</feature>
<feature type="disulfide bond" evidence="8 16">
    <location>
        <begin position="200"/>
        <end position="228"/>
    </location>
</feature>
<feature type="disulfide bond" evidence="3">
    <location>
        <begin position="2685"/>
        <end position="2716"/>
    </location>
</feature>
<feature type="disulfide bond" evidence="3">
    <location>
        <begin position="2704"/>
        <end position="2718"/>
    </location>
</feature>
<feature type="disulfide bond" evidence="7 15">
    <location>
        <begin position="2809"/>
        <end position="2886"/>
    </location>
</feature>
<feature type="splice variant" id="VSP_038170" description="In isoform 2." evidence="10">
    <location>
        <begin position="1"/>
        <end position="63"/>
    </location>
</feature>
<feature type="splice variant" id="VSP_038171" description="In isoform 3." evidence="13">
    <original>D</original>
    <variation>V</variation>
    <location>
        <position position="24"/>
    </location>
</feature>
<feature type="splice variant" id="VSP_038172" description="In isoform 3." evidence="13">
    <location>
        <begin position="25"/>
        <end position="229"/>
    </location>
</feature>
<feature type="splice variant" id="VSP_038173" description="In isoform 2." evidence="10">
    <location>
        <begin position="2243"/>
        <end position="2381"/>
    </location>
</feature>
<feature type="splice variant" id="VSP_038174" description="In isoform 2." evidence="10">
    <location>
        <begin position="2593"/>
        <end position="2637"/>
    </location>
</feature>
<feature type="splice variant" id="VSP_038175" description="In isoform 2." evidence="10">
    <location>
        <begin position="2979"/>
        <end position="3012"/>
    </location>
</feature>
<feature type="splice variant" id="VSP_038176" description="In isoform 2." evidence="10">
    <original>DDFDKDPYCSSP</original>
    <variation>APELSALHVVASEPTTG</variation>
    <location>
        <begin position="3069"/>
        <end position="3080"/>
    </location>
</feature>
<feature type="sequence variant" id="VAR_055929" description="In dbSNP:rs4829829." evidence="9">
    <original>I</original>
    <variation>M</variation>
    <location>
        <position position="276"/>
    </location>
</feature>
<feature type="sequence variant" id="VAR_059329" description="In dbSNP:rs5930931." evidence="9">
    <original>P</original>
    <variation>H</variation>
    <location>
        <position position="368"/>
    </location>
</feature>
<feature type="sequence variant" id="VAR_059330" description="In dbSNP:rs4829830.">
    <original>T</original>
    <variation>N</variation>
    <location>
        <position position="1213"/>
    </location>
</feature>
<feature type="sequence variant" id="VAR_059331" description="In dbSNP:rs912002.">
    <original>S</original>
    <variation>P</variation>
    <location>
        <position position="1540"/>
    </location>
</feature>
<feature type="sequence variant" id="VAR_059332" description="In dbSNP:rs5930932.">
    <original>F</original>
    <variation>L</variation>
    <location>
        <position position="1791"/>
    </location>
</feature>
<feature type="mutagenesis site" description="Increased basal G protein-coupled receptor activity." evidence="7">
    <original>I</original>
    <variation>A</variation>
    <location>
        <position position="2660"/>
    </location>
</feature>
<feature type="mutagenesis site" description="Increased basal G protein-coupled receptor activity." evidence="7">
    <original>L</original>
    <variation>A</variation>
    <location>
        <position position="2671"/>
    </location>
</feature>
<feature type="mutagenesis site" description="Increased basal G protein-coupled receptor activity." evidence="7">
    <original>V</original>
    <variation>A</variation>
    <location>
        <position position="2683"/>
    </location>
</feature>
<feature type="mutagenesis site" description="Strongly decreased G protein-coupled receptor activity." evidence="7">
    <original>T</original>
    <variation>A</variation>
    <location>
        <position position="2747"/>
    </location>
</feature>
<feature type="mutagenesis site" description="Strongly decreased G protein-coupled receptor activity." evidence="7">
    <original>F</original>
    <variation>A</variation>
    <location>
        <position position="2794"/>
    </location>
</feature>
<feature type="mutagenesis site" description="Decreased G protein-coupled receptor activity." evidence="7">
    <original>L</original>
    <variation>A</variation>
    <location>
        <position position="2820"/>
    </location>
</feature>
<feature type="mutagenesis site" description="Strongly decreased G protein-coupled receptor activity." evidence="7">
    <original>F</original>
    <variation>A</variation>
    <location>
        <position position="2885"/>
    </location>
</feature>
<feature type="mutagenesis site" description="Strongly decreased G protein-coupled receptor activity." evidence="7">
    <original>W</original>
    <variation>A</variation>
    <location>
        <position position="2953"/>
    </location>
</feature>
<feature type="mutagenesis site" description="Strongly decreased G protein-coupled receptor activity." evidence="7">
    <original>F</original>
    <variation>A</variation>
    <location>
        <position position="2957"/>
    </location>
</feature>
<feature type="mutagenesis site" description="Strongly decreased G protein-coupled receptor activity." evidence="7">
    <original>F</original>
    <variation>A</variation>
    <location>
        <position position="2971"/>
    </location>
</feature>
<feature type="sequence conflict" description="In Ref. 1; AAN46668." evidence="13" ref="1">
    <location>
        <position position="229"/>
    </location>
</feature>
<feature type="sequence conflict" description="In Ref. 1; AAN46668." evidence="13" ref="1">
    <location>
        <position position="2426"/>
    </location>
</feature>
<feature type="sequence conflict" description="In Ref. 1; AAN46668." evidence="13" ref="1">
    <location>
        <position position="2694"/>
    </location>
</feature>
<feature type="sequence conflict" description="In Ref. 1; AAN46668." evidence="13" ref="1">
    <location>
        <position position="2769"/>
    </location>
</feature>
<feature type="sequence conflict" description="In Ref. 1; AAN46668." evidence="13" ref="1">
    <location>
        <position position="2885"/>
    </location>
</feature>
<feature type="strand" evidence="18">
    <location>
        <begin position="31"/>
        <end position="34"/>
    </location>
</feature>
<feature type="strand" evidence="18">
    <location>
        <begin position="42"/>
        <end position="47"/>
    </location>
</feature>
<feature type="strand" evidence="18">
    <location>
        <begin position="52"/>
        <end position="67"/>
    </location>
</feature>
<feature type="strand" evidence="18">
    <location>
        <begin position="71"/>
        <end position="77"/>
    </location>
</feature>
<feature type="turn" evidence="18">
    <location>
        <begin position="79"/>
        <end position="85"/>
    </location>
</feature>
<feature type="strand" evidence="18">
    <location>
        <begin position="89"/>
        <end position="94"/>
    </location>
</feature>
<feature type="strand" evidence="18">
    <location>
        <begin position="96"/>
        <end position="103"/>
    </location>
</feature>
<feature type="strand" evidence="18">
    <location>
        <begin position="106"/>
        <end position="111"/>
    </location>
</feature>
<feature type="strand" evidence="18">
    <location>
        <begin position="120"/>
        <end position="127"/>
    </location>
</feature>
<feature type="turn" evidence="18">
    <location>
        <begin position="128"/>
        <end position="131"/>
    </location>
</feature>
<feature type="strand" evidence="18">
    <location>
        <begin position="132"/>
        <end position="137"/>
    </location>
</feature>
<feature type="strand" evidence="18">
    <location>
        <begin position="140"/>
        <end position="146"/>
    </location>
</feature>
<feature type="strand" evidence="18">
    <location>
        <begin position="157"/>
        <end position="160"/>
    </location>
</feature>
<feature type="strand" evidence="18">
    <location>
        <begin position="179"/>
        <end position="190"/>
    </location>
</feature>
<feature type="helix" evidence="18">
    <location>
        <begin position="194"/>
        <end position="196"/>
    </location>
</feature>
<feature type="strand" evidence="18">
    <location>
        <begin position="204"/>
        <end position="207"/>
    </location>
</feature>
<feature type="strand" evidence="18">
    <location>
        <begin position="213"/>
        <end position="217"/>
    </location>
</feature>
<feature type="helix" evidence="17">
    <location>
        <begin position="2724"/>
        <end position="2726"/>
    </location>
</feature>
<feature type="helix" evidence="17">
    <location>
        <begin position="2740"/>
        <end position="2757"/>
    </location>
</feature>
<feature type="helix" evidence="17">
    <location>
        <begin position="2759"/>
        <end position="2762"/>
    </location>
</feature>
<feature type="turn" evidence="17">
    <location>
        <begin position="2763"/>
        <end position="2765"/>
    </location>
</feature>
<feature type="helix" evidence="17">
    <location>
        <begin position="2770"/>
        <end position="2772"/>
    </location>
</feature>
<feature type="helix" evidence="17">
    <location>
        <begin position="2775"/>
        <end position="2802"/>
    </location>
</feature>
<feature type="helix" evidence="17">
    <location>
        <begin position="2806"/>
        <end position="2837"/>
    </location>
</feature>
<feature type="helix" evidence="17">
    <location>
        <begin position="2849"/>
        <end position="2857"/>
    </location>
</feature>
<feature type="helix" evidence="17">
    <location>
        <begin position="2860"/>
        <end position="2871"/>
    </location>
</feature>
<feature type="helix" evidence="17">
    <location>
        <begin position="2873"/>
        <end position="2876"/>
    </location>
</feature>
<feature type="helix" evidence="17">
    <location>
        <begin position="2892"/>
        <end position="2895"/>
    </location>
</feature>
<feature type="turn" evidence="17">
    <location>
        <begin position="2896"/>
        <end position="2898"/>
    </location>
</feature>
<feature type="helix" evidence="17">
    <location>
        <begin position="2899"/>
        <end position="2924"/>
    </location>
</feature>
<feature type="turn" evidence="17">
    <location>
        <begin position="2932"/>
        <end position="2934"/>
    </location>
</feature>
<feature type="helix" evidence="17">
    <location>
        <begin position="2936"/>
        <end position="2942"/>
    </location>
</feature>
<feature type="turn" evidence="17">
    <location>
        <begin position="2943"/>
        <end position="2950"/>
    </location>
</feature>
<feature type="helix" evidence="17">
    <location>
        <begin position="2952"/>
        <end position="2954"/>
    </location>
</feature>
<feature type="helix" evidence="17">
    <location>
        <begin position="2955"/>
        <end position="2959"/>
    </location>
</feature>
<feature type="strand" evidence="17">
    <location>
        <begin position="2961"/>
        <end position="2963"/>
    </location>
</feature>
<feature type="helix" evidence="17">
    <location>
        <begin position="2966"/>
        <end position="2974"/>
    </location>
</feature>
<feature type="helix" evidence="17">
    <location>
        <begin position="2978"/>
        <end position="2986"/>
    </location>
</feature>
<feature type="turn" evidence="17">
    <location>
        <begin position="2987"/>
        <end position="2990"/>
    </location>
</feature>
<feature type="helix" evidence="17">
    <location>
        <begin position="2993"/>
        <end position="2997"/>
    </location>
</feature>
<comment type="function">
    <text evidence="1 7 8">Orphan adhesion G-protein coupled receptor (aGPCR) (By similarity). Ligand binding causes a conformation change that triggers signaling via guanine nucleotide-binding proteins (G proteins) and modulates the activity of downstream effectors, such as adenylate cyclase (By similarity). ADGRG4 is coupled to G(s) G proteins and mediates activation of adenylate cyclase activity (PubMed:35418677). May be act as sensor of mechanical forces (PubMed:37863265).</text>
</comment>
<comment type="activity regulation">
    <text evidence="3 7">Forms a heterodimer of 2 chains generated by proteolytic processing that remain associated through non-covalent interactions mediated by the GAIN-B domain (By similarity). In the inactivated receptor, the Stachel sequence (also named stalk) is embedded in the GAIN-B domain, where it adopts a beta-strand conformation (PubMed:35418677). On activation, the Stachel moves into the 7 transmembrane region and adopts a twisted hook-shaped configuration that forms contacts within the receptor, leading to coupling of a G-alpha protein, which activates signaling (PubMed:35418677). The cleaved GAIN-B and N-terminal domains can then dissociate from the rest of the receptor (PubMed:35418677).</text>
</comment>
<comment type="subunit">
    <text evidence="3 8">Homodimer; homodimerizes via its Pentraxin domain in a calcium-independent manner (PubMed:37863265). Heterodimer of 2 chains generated by proteolytic processing; the large extracellular N-terminal fragment and the membrane-bound C-terminal fragment predominantly remain associated and non-covalently linked (By similarity).</text>
</comment>
<comment type="subcellular location">
    <subcellularLocation>
        <location evidence="2">Membrane</location>
        <topology evidence="7">Multi-pass membrane protein</topology>
    </subcellularLocation>
</comment>
<comment type="alternative products">
    <event type="alternative splicing"/>
    <isoform>
        <id>Q8IZF6-1</id>
        <name>1</name>
        <sequence type="displayed"/>
    </isoform>
    <isoform>
        <id>Q8IZF6-2</id>
        <name>2</name>
        <sequence type="described" ref="VSP_038170 VSP_038173 VSP_038174 VSP_038175 VSP_038176"/>
    </isoform>
    <isoform>
        <id>Q8IZF6-3</id>
        <name>3</name>
        <sequence type="described" ref="VSP_038171 VSP_038172"/>
    </isoform>
</comment>
<comment type="tissue specificity">
    <text evidence="6">Detected in fetal retina. Highly expressed in normal enterochromaffin cells and in neuroendocrine carcinoma. Detected in normal liver; highly expressed in primary liver carcinoma.</text>
</comment>
<comment type="domain">
    <text evidence="7">The Stachel sequence (also named stalk) in the C-terminal part of the extracellular domain (ECD) functions as a tethered agonist (PubMed:35418677). In the inactivated receptor, the Stachel sequence (also named stalk) is embedded in the GAIN-B domain, where it adopts a beta-strand conformation (PubMed:35418677). On activation, the Stachel moves into the 7 transmembrane region and adopts a twisted hook-shaped configuration that forms contacts within the receptor, leading to coupling of a G-alpha protein, which activates signaling (PubMed:35418677).</text>
</comment>
<comment type="PTM">
    <text evidence="3">Autoproteolytically processed at the GPS region of the GAIN-B domain; this cleavage modulates receptor activity.</text>
</comment>
<comment type="PTM">
    <text evidence="8">N-glycosylated.</text>
</comment>
<comment type="similarity">
    <text evidence="13">Belongs to the G-protein coupled receptor 2 family. Adhesion G-protein coupled receptor (ADGR) subfamily.</text>
</comment>